<organism>
    <name type="scientific">Ectopseudomonas mendocina (strain ymp)</name>
    <name type="common">Pseudomonas mendocina</name>
    <dbReference type="NCBI Taxonomy" id="399739"/>
    <lineage>
        <taxon>Bacteria</taxon>
        <taxon>Pseudomonadati</taxon>
        <taxon>Pseudomonadota</taxon>
        <taxon>Gammaproteobacteria</taxon>
        <taxon>Pseudomonadales</taxon>
        <taxon>Pseudomonadaceae</taxon>
        <taxon>Ectopseudomonas</taxon>
    </lineage>
</organism>
<comment type="cofactor">
    <cofactor evidence="1">
        <name>Mg(2+)</name>
        <dbReference type="ChEBI" id="CHEBI:18420"/>
    </cofactor>
    <cofactor evidence="1">
        <name>Mn(2+)</name>
        <dbReference type="ChEBI" id="CHEBI:29035"/>
    </cofactor>
    <text evidence="1">Binds 2 magnesium or manganese ions per subunit.</text>
</comment>
<comment type="similarity">
    <text evidence="1">Belongs to the RimK family.</text>
</comment>
<accession>A4XP70</accession>
<feature type="chain" id="PRO_1000068849" description="Probable alpha-L-glutamate ligase">
    <location>
        <begin position="1"/>
        <end position="301"/>
    </location>
</feature>
<feature type="domain" description="ATP-grasp" evidence="1">
    <location>
        <begin position="104"/>
        <end position="287"/>
    </location>
</feature>
<feature type="binding site" evidence="1">
    <location>
        <position position="141"/>
    </location>
    <ligand>
        <name>ATP</name>
        <dbReference type="ChEBI" id="CHEBI:30616"/>
    </ligand>
</feature>
<feature type="binding site" evidence="1">
    <location>
        <begin position="178"/>
        <end position="179"/>
    </location>
    <ligand>
        <name>ATP</name>
        <dbReference type="ChEBI" id="CHEBI:30616"/>
    </ligand>
</feature>
<feature type="binding site" evidence="1">
    <location>
        <position position="187"/>
    </location>
    <ligand>
        <name>ATP</name>
        <dbReference type="ChEBI" id="CHEBI:30616"/>
    </ligand>
</feature>
<feature type="binding site" evidence="1">
    <location>
        <begin position="211"/>
        <end position="213"/>
    </location>
    <ligand>
        <name>ATP</name>
        <dbReference type="ChEBI" id="CHEBI:30616"/>
    </ligand>
</feature>
<feature type="binding site" evidence="1">
    <location>
        <position position="248"/>
    </location>
    <ligand>
        <name>Mg(2+)</name>
        <dbReference type="ChEBI" id="CHEBI:18420"/>
        <label>1</label>
    </ligand>
</feature>
<feature type="binding site" evidence="1">
    <location>
        <position position="248"/>
    </location>
    <ligand>
        <name>Mn(2+)</name>
        <dbReference type="ChEBI" id="CHEBI:29035"/>
        <label>1</label>
    </ligand>
</feature>
<feature type="binding site" evidence="1">
    <location>
        <position position="260"/>
    </location>
    <ligand>
        <name>Mg(2+)</name>
        <dbReference type="ChEBI" id="CHEBI:18420"/>
        <label>1</label>
    </ligand>
</feature>
<feature type="binding site" evidence="1">
    <location>
        <position position="260"/>
    </location>
    <ligand>
        <name>Mg(2+)</name>
        <dbReference type="ChEBI" id="CHEBI:18420"/>
        <label>2</label>
    </ligand>
</feature>
<feature type="binding site" evidence="1">
    <location>
        <position position="260"/>
    </location>
    <ligand>
        <name>Mn(2+)</name>
        <dbReference type="ChEBI" id="CHEBI:29035"/>
        <label>1</label>
    </ligand>
</feature>
<feature type="binding site" evidence="1">
    <location>
        <position position="260"/>
    </location>
    <ligand>
        <name>Mn(2+)</name>
        <dbReference type="ChEBI" id="CHEBI:29035"/>
        <label>2</label>
    </ligand>
</feature>
<feature type="binding site" evidence="1">
    <location>
        <position position="262"/>
    </location>
    <ligand>
        <name>Mg(2+)</name>
        <dbReference type="ChEBI" id="CHEBI:18420"/>
        <label>2</label>
    </ligand>
</feature>
<feature type="binding site" evidence="1">
    <location>
        <position position="262"/>
    </location>
    <ligand>
        <name>Mn(2+)</name>
        <dbReference type="ChEBI" id="CHEBI:29035"/>
        <label>2</label>
    </ligand>
</feature>
<proteinExistence type="inferred from homology"/>
<protein>
    <recommendedName>
        <fullName evidence="1">Probable alpha-L-glutamate ligase</fullName>
        <ecNumber evidence="1">6.3.2.-</ecNumber>
    </recommendedName>
</protein>
<evidence type="ECO:0000255" key="1">
    <source>
        <dbReference type="HAMAP-Rule" id="MF_01552"/>
    </source>
</evidence>
<reference key="1">
    <citation type="submission" date="2007-04" db="EMBL/GenBank/DDBJ databases">
        <title>Complete sequence of Pseudomonas mendocina ymp.</title>
        <authorList>
            <consortium name="US DOE Joint Genome Institute"/>
            <person name="Copeland A."/>
            <person name="Lucas S."/>
            <person name="Lapidus A."/>
            <person name="Barry K."/>
            <person name="Glavina del Rio T."/>
            <person name="Dalin E."/>
            <person name="Tice H."/>
            <person name="Pitluck S."/>
            <person name="Kiss H."/>
            <person name="Brettin T."/>
            <person name="Detter J.C."/>
            <person name="Bruce D."/>
            <person name="Han C."/>
            <person name="Schmutz J."/>
            <person name="Larimer F."/>
            <person name="Land M."/>
            <person name="Hauser L."/>
            <person name="Kyrpides N."/>
            <person name="Mikhailova N."/>
            <person name="Hersman L."/>
            <person name="Dubois J."/>
            <person name="Maurice P."/>
            <person name="Richardson P."/>
        </authorList>
    </citation>
    <scope>NUCLEOTIDE SEQUENCE [LARGE SCALE GENOMIC DNA]</scope>
    <source>
        <strain>ymp</strain>
    </source>
</reference>
<dbReference type="EC" id="6.3.2.-" evidence="1"/>
<dbReference type="EMBL" id="CP000680">
    <property type="protein sequence ID" value="ABP83136.1"/>
    <property type="molecule type" value="Genomic_DNA"/>
</dbReference>
<dbReference type="SMR" id="A4XP70"/>
<dbReference type="STRING" id="399739.Pmen_0363"/>
<dbReference type="KEGG" id="pmy:Pmen_0363"/>
<dbReference type="PATRIC" id="fig|399739.8.peg.372"/>
<dbReference type="eggNOG" id="COG0189">
    <property type="taxonomic scope" value="Bacteria"/>
</dbReference>
<dbReference type="HOGENOM" id="CLU_054353_0_1_6"/>
<dbReference type="OrthoDB" id="3865600at2"/>
<dbReference type="GO" id="GO:0005737">
    <property type="term" value="C:cytoplasm"/>
    <property type="evidence" value="ECO:0007669"/>
    <property type="project" value="TreeGrafter"/>
</dbReference>
<dbReference type="GO" id="GO:0005524">
    <property type="term" value="F:ATP binding"/>
    <property type="evidence" value="ECO:0007669"/>
    <property type="project" value="UniProtKB-UniRule"/>
</dbReference>
<dbReference type="GO" id="GO:0046872">
    <property type="term" value="F:metal ion binding"/>
    <property type="evidence" value="ECO:0007669"/>
    <property type="project" value="UniProtKB-KW"/>
</dbReference>
<dbReference type="GO" id="GO:0018169">
    <property type="term" value="F:ribosomal S6-glutamic acid ligase activity"/>
    <property type="evidence" value="ECO:0007669"/>
    <property type="project" value="TreeGrafter"/>
</dbReference>
<dbReference type="GO" id="GO:0036211">
    <property type="term" value="P:protein modification process"/>
    <property type="evidence" value="ECO:0007669"/>
    <property type="project" value="InterPro"/>
</dbReference>
<dbReference type="GO" id="GO:0009432">
    <property type="term" value="P:SOS response"/>
    <property type="evidence" value="ECO:0007669"/>
    <property type="project" value="TreeGrafter"/>
</dbReference>
<dbReference type="GO" id="GO:0006412">
    <property type="term" value="P:translation"/>
    <property type="evidence" value="ECO:0007669"/>
    <property type="project" value="UniProtKB-KW"/>
</dbReference>
<dbReference type="FunFam" id="3.40.50.20:FF:000004">
    <property type="entry name" value="Probable alpha-L-glutamate ligase"/>
    <property type="match status" value="1"/>
</dbReference>
<dbReference type="FunFam" id="3.30.1490.20:FF:000005">
    <property type="entry name" value="Probable alpha-L-glutamate ligase 1"/>
    <property type="match status" value="1"/>
</dbReference>
<dbReference type="FunFam" id="3.30.470.20:FF:000016">
    <property type="entry name" value="Ribosomal protein S6--L-glutamate ligase"/>
    <property type="match status" value="1"/>
</dbReference>
<dbReference type="Gene3D" id="3.40.50.20">
    <property type="match status" value="1"/>
</dbReference>
<dbReference type="Gene3D" id="3.30.1490.20">
    <property type="entry name" value="ATP-grasp fold, A domain"/>
    <property type="match status" value="1"/>
</dbReference>
<dbReference type="Gene3D" id="3.30.470.20">
    <property type="entry name" value="ATP-grasp fold, B domain"/>
    <property type="match status" value="1"/>
</dbReference>
<dbReference type="HAMAP" id="MF_01552">
    <property type="entry name" value="RimK"/>
    <property type="match status" value="1"/>
</dbReference>
<dbReference type="InterPro" id="IPR011761">
    <property type="entry name" value="ATP-grasp"/>
</dbReference>
<dbReference type="InterPro" id="IPR013651">
    <property type="entry name" value="ATP-grasp_RimK-type"/>
</dbReference>
<dbReference type="InterPro" id="IPR013815">
    <property type="entry name" value="ATP_grasp_subdomain_1"/>
</dbReference>
<dbReference type="InterPro" id="IPR023533">
    <property type="entry name" value="RimK"/>
</dbReference>
<dbReference type="InterPro" id="IPR041107">
    <property type="entry name" value="Rimk_N"/>
</dbReference>
<dbReference type="InterPro" id="IPR004666">
    <property type="entry name" value="Rp_bS6_RimK/Lys_biosynth_LsyX"/>
</dbReference>
<dbReference type="NCBIfam" id="NF007764">
    <property type="entry name" value="PRK10446.1"/>
    <property type="match status" value="1"/>
</dbReference>
<dbReference type="NCBIfam" id="TIGR00768">
    <property type="entry name" value="rimK_fam"/>
    <property type="match status" value="1"/>
</dbReference>
<dbReference type="PANTHER" id="PTHR21621:SF7">
    <property type="entry name" value="RIBOSOMAL PROTEIN BS6--L-GLUTAMATE LIGASE"/>
    <property type="match status" value="1"/>
</dbReference>
<dbReference type="PANTHER" id="PTHR21621">
    <property type="entry name" value="RIBOSOMAL PROTEIN S6 MODIFICATION PROTEIN"/>
    <property type="match status" value="1"/>
</dbReference>
<dbReference type="Pfam" id="PF08443">
    <property type="entry name" value="RimK"/>
    <property type="match status" value="1"/>
</dbReference>
<dbReference type="Pfam" id="PF18030">
    <property type="entry name" value="Rimk_N"/>
    <property type="match status" value="1"/>
</dbReference>
<dbReference type="SUPFAM" id="SSF56059">
    <property type="entry name" value="Glutathione synthetase ATP-binding domain-like"/>
    <property type="match status" value="1"/>
</dbReference>
<dbReference type="PROSITE" id="PS50975">
    <property type="entry name" value="ATP_GRASP"/>
    <property type="match status" value="1"/>
</dbReference>
<keyword id="KW-0067">ATP-binding</keyword>
<keyword id="KW-0436">Ligase</keyword>
<keyword id="KW-0460">Magnesium</keyword>
<keyword id="KW-0464">Manganese</keyword>
<keyword id="KW-0479">Metal-binding</keyword>
<keyword id="KW-0547">Nucleotide-binding</keyword>
<keyword id="KW-0648">Protein biosynthesis</keyword>
<name>RIMK_ECTM1</name>
<sequence>MKIAVLSRNPRLYSTRRLVEAGQQRGHEMQVIDTLRAYMNIASHKPQIHYRGRALEGFDAVIPRIGASVTFYGCAVLRQFEMMGVYPLNESVAISRSRDKLRALQLLSRKGIGLPVTGFAHSPDDIPDLIQMVGGAPLVIKVLEGTQGMGVVLAETTKAAESVIEAFFGLKQDIMVQEYIQEAGGADIRCFVVGDKVIASMKRQAKAGEFRSNLHRGGSASLIKITPEERMTAVRAAKVMGLNVAGVDILRSNHGPLVMEVNSSPGLEGIETTTGKDVAGMIIQYLEKNAEPGQTRTKGRG</sequence>
<gene>
    <name evidence="1" type="primary">rimK</name>
    <name type="ordered locus">Pmen_0363</name>
</gene>